<name>PANC_SHEWM</name>
<dbReference type="EC" id="6.3.2.1" evidence="1"/>
<dbReference type="EMBL" id="CP000961">
    <property type="protein sequence ID" value="ACA88062.1"/>
    <property type="molecule type" value="Genomic_DNA"/>
</dbReference>
<dbReference type="RefSeq" id="WP_012326393.1">
    <property type="nucleotide sequence ID" value="NC_010506.1"/>
</dbReference>
<dbReference type="SMR" id="B1KEP7"/>
<dbReference type="STRING" id="392500.Swoo_3803"/>
<dbReference type="KEGG" id="swd:Swoo_3803"/>
<dbReference type="eggNOG" id="COG0414">
    <property type="taxonomic scope" value="Bacteria"/>
</dbReference>
<dbReference type="HOGENOM" id="CLU_047148_0_0_6"/>
<dbReference type="UniPathway" id="UPA00028">
    <property type="reaction ID" value="UER00005"/>
</dbReference>
<dbReference type="Proteomes" id="UP000002168">
    <property type="component" value="Chromosome"/>
</dbReference>
<dbReference type="GO" id="GO:0005829">
    <property type="term" value="C:cytosol"/>
    <property type="evidence" value="ECO:0007669"/>
    <property type="project" value="TreeGrafter"/>
</dbReference>
<dbReference type="GO" id="GO:0005524">
    <property type="term" value="F:ATP binding"/>
    <property type="evidence" value="ECO:0007669"/>
    <property type="project" value="UniProtKB-KW"/>
</dbReference>
<dbReference type="GO" id="GO:0004592">
    <property type="term" value="F:pantoate-beta-alanine ligase activity"/>
    <property type="evidence" value="ECO:0007669"/>
    <property type="project" value="UniProtKB-UniRule"/>
</dbReference>
<dbReference type="GO" id="GO:0015940">
    <property type="term" value="P:pantothenate biosynthetic process"/>
    <property type="evidence" value="ECO:0007669"/>
    <property type="project" value="UniProtKB-UniRule"/>
</dbReference>
<dbReference type="CDD" id="cd00560">
    <property type="entry name" value="PanC"/>
    <property type="match status" value="1"/>
</dbReference>
<dbReference type="FunFam" id="3.40.50.620:FF:000013">
    <property type="entry name" value="Pantothenate synthetase"/>
    <property type="match status" value="1"/>
</dbReference>
<dbReference type="Gene3D" id="3.40.50.620">
    <property type="entry name" value="HUPs"/>
    <property type="match status" value="1"/>
</dbReference>
<dbReference type="Gene3D" id="3.30.1300.10">
    <property type="entry name" value="Pantoate-beta-alanine ligase, C-terminal domain"/>
    <property type="match status" value="1"/>
</dbReference>
<dbReference type="HAMAP" id="MF_00158">
    <property type="entry name" value="PanC"/>
    <property type="match status" value="1"/>
</dbReference>
<dbReference type="InterPro" id="IPR004821">
    <property type="entry name" value="Cyt_trans-like"/>
</dbReference>
<dbReference type="InterPro" id="IPR003721">
    <property type="entry name" value="Pantoate_ligase"/>
</dbReference>
<dbReference type="InterPro" id="IPR042176">
    <property type="entry name" value="Pantoate_ligase_C"/>
</dbReference>
<dbReference type="InterPro" id="IPR014729">
    <property type="entry name" value="Rossmann-like_a/b/a_fold"/>
</dbReference>
<dbReference type="NCBIfam" id="TIGR00125">
    <property type="entry name" value="cyt_tran_rel"/>
    <property type="match status" value="1"/>
</dbReference>
<dbReference type="NCBIfam" id="TIGR00018">
    <property type="entry name" value="panC"/>
    <property type="match status" value="1"/>
</dbReference>
<dbReference type="PANTHER" id="PTHR21299">
    <property type="entry name" value="CYTIDYLATE KINASE/PANTOATE-BETA-ALANINE LIGASE"/>
    <property type="match status" value="1"/>
</dbReference>
<dbReference type="PANTHER" id="PTHR21299:SF1">
    <property type="entry name" value="PANTOATE--BETA-ALANINE LIGASE"/>
    <property type="match status" value="1"/>
</dbReference>
<dbReference type="Pfam" id="PF02569">
    <property type="entry name" value="Pantoate_ligase"/>
    <property type="match status" value="1"/>
</dbReference>
<dbReference type="SUPFAM" id="SSF52374">
    <property type="entry name" value="Nucleotidylyl transferase"/>
    <property type="match status" value="1"/>
</dbReference>
<comment type="function">
    <text evidence="1">Catalyzes the condensation of pantoate with beta-alanine in an ATP-dependent reaction via a pantoyl-adenylate intermediate.</text>
</comment>
<comment type="catalytic activity">
    <reaction evidence="1">
        <text>(R)-pantoate + beta-alanine + ATP = (R)-pantothenate + AMP + diphosphate + H(+)</text>
        <dbReference type="Rhea" id="RHEA:10912"/>
        <dbReference type="ChEBI" id="CHEBI:15378"/>
        <dbReference type="ChEBI" id="CHEBI:15980"/>
        <dbReference type="ChEBI" id="CHEBI:29032"/>
        <dbReference type="ChEBI" id="CHEBI:30616"/>
        <dbReference type="ChEBI" id="CHEBI:33019"/>
        <dbReference type="ChEBI" id="CHEBI:57966"/>
        <dbReference type="ChEBI" id="CHEBI:456215"/>
        <dbReference type="EC" id="6.3.2.1"/>
    </reaction>
</comment>
<comment type="pathway">
    <text evidence="1">Cofactor biosynthesis; (R)-pantothenate biosynthesis; (R)-pantothenate from (R)-pantoate and beta-alanine: step 1/1.</text>
</comment>
<comment type="subunit">
    <text evidence="1">Homodimer.</text>
</comment>
<comment type="subcellular location">
    <subcellularLocation>
        <location evidence="1">Cytoplasm</location>
    </subcellularLocation>
</comment>
<comment type="miscellaneous">
    <text evidence="1">The reaction proceeds by a bi uni uni bi ping pong mechanism.</text>
</comment>
<comment type="similarity">
    <text evidence="1">Belongs to the pantothenate synthetase family.</text>
</comment>
<sequence length="281" mass="30902">MITTQEIQQIREQIRTWRTKGETIAFVPTMGNLHLGHITLIKEAAKRADHVVASIFVNPMQFGANEDLDAYPRTLEADKLALSDAGAELLFTPTPDIIYPKGMEQQTYVEVPKIGDQLCGASRPGHFRGVATVVCKLFNIVQPDIALFGRKDFQQLMIIKTMVEDLSLPIEIVGIDTIRETSGLAMSSRNGYLSTAQKSQAAVLKQTMDQISSAVKQGASLDLAIENGKQALIDSGFTPDYLELRNAKDLSLVTDGQDELVILAAAYMGNTRLIDNLCFTR</sequence>
<keyword id="KW-0067">ATP-binding</keyword>
<keyword id="KW-0963">Cytoplasm</keyword>
<keyword id="KW-0436">Ligase</keyword>
<keyword id="KW-0547">Nucleotide-binding</keyword>
<keyword id="KW-0566">Pantothenate biosynthesis</keyword>
<keyword id="KW-1185">Reference proteome</keyword>
<protein>
    <recommendedName>
        <fullName evidence="1">Pantothenate synthetase</fullName>
        <shortName evidence="1">PS</shortName>
        <ecNumber evidence="1">6.3.2.1</ecNumber>
    </recommendedName>
    <alternativeName>
        <fullName evidence="1">Pantoate--beta-alanine ligase</fullName>
    </alternativeName>
    <alternativeName>
        <fullName evidence="1">Pantoate-activating enzyme</fullName>
    </alternativeName>
</protein>
<evidence type="ECO:0000255" key="1">
    <source>
        <dbReference type="HAMAP-Rule" id="MF_00158"/>
    </source>
</evidence>
<gene>
    <name evidence="1" type="primary">panC</name>
    <name type="ordered locus">Swoo_3803</name>
</gene>
<feature type="chain" id="PRO_1000097115" description="Pantothenate synthetase">
    <location>
        <begin position="1"/>
        <end position="281"/>
    </location>
</feature>
<feature type="active site" description="Proton donor" evidence="1">
    <location>
        <position position="37"/>
    </location>
</feature>
<feature type="binding site" evidence="1">
    <location>
        <begin position="30"/>
        <end position="37"/>
    </location>
    <ligand>
        <name>ATP</name>
        <dbReference type="ChEBI" id="CHEBI:30616"/>
    </ligand>
</feature>
<feature type="binding site" evidence="1">
    <location>
        <position position="61"/>
    </location>
    <ligand>
        <name>(R)-pantoate</name>
        <dbReference type="ChEBI" id="CHEBI:15980"/>
    </ligand>
</feature>
<feature type="binding site" evidence="1">
    <location>
        <position position="61"/>
    </location>
    <ligand>
        <name>beta-alanine</name>
        <dbReference type="ChEBI" id="CHEBI:57966"/>
    </ligand>
</feature>
<feature type="binding site" evidence="1">
    <location>
        <begin position="149"/>
        <end position="152"/>
    </location>
    <ligand>
        <name>ATP</name>
        <dbReference type="ChEBI" id="CHEBI:30616"/>
    </ligand>
</feature>
<feature type="binding site" evidence="1">
    <location>
        <position position="155"/>
    </location>
    <ligand>
        <name>(R)-pantoate</name>
        <dbReference type="ChEBI" id="CHEBI:15980"/>
    </ligand>
</feature>
<feature type="binding site" evidence="1">
    <location>
        <position position="178"/>
    </location>
    <ligand>
        <name>ATP</name>
        <dbReference type="ChEBI" id="CHEBI:30616"/>
    </ligand>
</feature>
<feature type="binding site" evidence="1">
    <location>
        <begin position="186"/>
        <end position="189"/>
    </location>
    <ligand>
        <name>ATP</name>
        <dbReference type="ChEBI" id="CHEBI:30616"/>
    </ligand>
</feature>
<reference key="1">
    <citation type="submission" date="2008-02" db="EMBL/GenBank/DDBJ databases">
        <title>Complete sequence of Shewanella woodyi ATCC 51908.</title>
        <authorList>
            <consortium name="US DOE Joint Genome Institute"/>
            <person name="Copeland A."/>
            <person name="Lucas S."/>
            <person name="Lapidus A."/>
            <person name="Glavina del Rio T."/>
            <person name="Dalin E."/>
            <person name="Tice H."/>
            <person name="Bruce D."/>
            <person name="Goodwin L."/>
            <person name="Pitluck S."/>
            <person name="Sims D."/>
            <person name="Brettin T."/>
            <person name="Detter J.C."/>
            <person name="Han C."/>
            <person name="Kuske C.R."/>
            <person name="Schmutz J."/>
            <person name="Larimer F."/>
            <person name="Land M."/>
            <person name="Hauser L."/>
            <person name="Kyrpides N."/>
            <person name="Lykidis A."/>
            <person name="Zhao J.-S."/>
            <person name="Richardson P."/>
        </authorList>
    </citation>
    <scope>NUCLEOTIDE SEQUENCE [LARGE SCALE GENOMIC DNA]</scope>
    <source>
        <strain>ATCC 51908 / MS32</strain>
    </source>
</reference>
<accession>B1KEP7</accession>
<organism>
    <name type="scientific">Shewanella woodyi (strain ATCC 51908 / MS32)</name>
    <dbReference type="NCBI Taxonomy" id="392500"/>
    <lineage>
        <taxon>Bacteria</taxon>
        <taxon>Pseudomonadati</taxon>
        <taxon>Pseudomonadota</taxon>
        <taxon>Gammaproteobacteria</taxon>
        <taxon>Alteromonadales</taxon>
        <taxon>Shewanellaceae</taxon>
        <taxon>Shewanella</taxon>
    </lineage>
</organism>
<proteinExistence type="inferred from homology"/>